<evidence type="ECO:0000250" key="1"/>
<evidence type="ECO:0000305" key="2"/>
<name>C77A2_SOLME</name>
<dbReference type="EC" id="1.14.-.-"/>
<dbReference type="EMBL" id="X71655">
    <property type="protein sequence ID" value="CAA50646.1"/>
    <property type="molecule type" value="mRNA"/>
</dbReference>
<dbReference type="PIR" id="S41598">
    <property type="entry name" value="S41598"/>
</dbReference>
<dbReference type="SMR" id="P37124"/>
<dbReference type="GO" id="GO:0020037">
    <property type="term" value="F:heme binding"/>
    <property type="evidence" value="ECO:0007669"/>
    <property type="project" value="InterPro"/>
</dbReference>
<dbReference type="GO" id="GO:0005506">
    <property type="term" value="F:iron ion binding"/>
    <property type="evidence" value="ECO:0007669"/>
    <property type="project" value="InterPro"/>
</dbReference>
<dbReference type="GO" id="GO:0004497">
    <property type="term" value="F:monooxygenase activity"/>
    <property type="evidence" value="ECO:0007669"/>
    <property type="project" value="UniProtKB-KW"/>
</dbReference>
<dbReference type="GO" id="GO:0016705">
    <property type="term" value="F:oxidoreductase activity, acting on paired donors, with incorporation or reduction of molecular oxygen"/>
    <property type="evidence" value="ECO:0007669"/>
    <property type="project" value="InterPro"/>
</dbReference>
<dbReference type="CDD" id="cd11075">
    <property type="entry name" value="CYP77_89"/>
    <property type="match status" value="1"/>
</dbReference>
<dbReference type="FunFam" id="1.10.630.10:FF:000012">
    <property type="entry name" value="Cytochrome P450 family protein"/>
    <property type="match status" value="1"/>
</dbReference>
<dbReference type="Gene3D" id="1.10.630.10">
    <property type="entry name" value="Cytochrome P450"/>
    <property type="match status" value="1"/>
</dbReference>
<dbReference type="InterPro" id="IPR001128">
    <property type="entry name" value="Cyt_P450"/>
</dbReference>
<dbReference type="InterPro" id="IPR017972">
    <property type="entry name" value="Cyt_P450_CS"/>
</dbReference>
<dbReference type="InterPro" id="IPR002401">
    <property type="entry name" value="Cyt_P450_E_grp-I"/>
</dbReference>
<dbReference type="InterPro" id="IPR036396">
    <property type="entry name" value="Cyt_P450_sf"/>
</dbReference>
<dbReference type="PANTHER" id="PTHR47944:SF19">
    <property type="entry name" value="CYTOCHROME P450 77A4"/>
    <property type="match status" value="1"/>
</dbReference>
<dbReference type="PANTHER" id="PTHR47944">
    <property type="entry name" value="CYTOCHROME P450 98A9"/>
    <property type="match status" value="1"/>
</dbReference>
<dbReference type="Pfam" id="PF00067">
    <property type="entry name" value="p450"/>
    <property type="match status" value="1"/>
</dbReference>
<dbReference type="PRINTS" id="PR00463">
    <property type="entry name" value="EP450I"/>
</dbReference>
<dbReference type="PRINTS" id="PR00385">
    <property type="entry name" value="P450"/>
</dbReference>
<dbReference type="SUPFAM" id="SSF48264">
    <property type="entry name" value="Cytochrome P450"/>
    <property type="match status" value="1"/>
</dbReference>
<dbReference type="PROSITE" id="PS00086">
    <property type="entry name" value="CYTOCHROME_P450"/>
    <property type="match status" value="1"/>
</dbReference>
<accession>P37124</accession>
<comment type="cofactor">
    <cofactor evidence="1">
        <name>heme</name>
        <dbReference type="ChEBI" id="CHEBI:30413"/>
    </cofactor>
</comment>
<comment type="similarity">
    <text evidence="2">Belongs to the cytochrome P450 family.</text>
</comment>
<reference key="1">
    <citation type="journal article" date="1994" name="FEBS Lett.">
        <title>Cloning of eggplant hypocotyl cDNAs encoding cytochromes P450 belonging to a novel family (CYP77).</title>
        <authorList>
            <person name="Toguri T."/>
            <person name="Tokugawa K."/>
        </authorList>
    </citation>
    <scope>NUCLEOTIDE SEQUENCE [MRNA]</scope>
    <source>
        <strain>cv. Sinsadoharanasu</strain>
        <tissue>Hypocotyl</tissue>
    </source>
</reference>
<proteinExistence type="evidence at transcript level"/>
<gene>
    <name type="primary">CYP77A2</name>
    <name type="synonym">CYPEG5</name>
</gene>
<feature type="chain" id="PRO_0000052146" description="Cytochrome P450 77A2">
    <location>
        <begin position="1"/>
        <end position="511"/>
    </location>
</feature>
<feature type="binding site" description="axial binding residue" evidence="1">
    <location>
        <position position="456"/>
    </location>
    <ligand>
        <name>heme</name>
        <dbReference type="ChEBI" id="CHEBI:30413"/>
    </ligand>
    <ligandPart>
        <name>Fe</name>
        <dbReference type="ChEBI" id="CHEBI:18248"/>
    </ligandPart>
</feature>
<keyword id="KW-0349">Heme</keyword>
<keyword id="KW-0408">Iron</keyword>
<keyword id="KW-0479">Metal-binding</keyword>
<keyword id="KW-0503">Monooxygenase</keyword>
<keyword id="KW-0560">Oxidoreductase</keyword>
<protein>
    <recommendedName>
        <fullName>Cytochrome P450 77A2</fullName>
        <ecNumber>1.14.-.-</ecNumber>
    </recommendedName>
    <alternativeName>
        <fullName>CYPLXXVIIA2</fullName>
    </alternativeName>
    <alternativeName>
        <fullName>Cytochrome P-450EG5</fullName>
    </alternativeName>
</protein>
<sequence length="511" mass="58115">MDFFSTSSLSSYYHLIFTILAFVISSIIYFLSKKAESKKLKLPPGPPGWPVVGNLLQVARSGKPFFQIMRELRQKYGPIFTLRMGTRTMIILSNADLVHEALILKGQVFATRPRENPTRTVFSCDKFTVNAAVYGPVWRSLRKNMVQNGLSSIRLKEFRAVRKSAMDKMIEKIRAEADANEGVVWVLKNARFAVFCILLAMCFGVEMDEKTIEKIDQMMKSVLIALDPRLDDYLPILSPFFSKQRKHAMDVRKQQIKTIVPFIEQRKKILESPEIDKTAASFSYLDTLFDLKIEGRNSTPTYPELVTLCSEFLNGGTDTTATAIEWAIGRLIENPNIQSQLYEEIKKTVGENKIDEKDIEKMPYLNAVVKELLRKHPPTYMSLTHAVTEPAKLGGYDIPTGVNVEIFLPGISDDPNLWSEPEKFDPDRFYLGKEDADITGVSGVKMIPFGMGRRICPGLNMATVHVSLMLARLVQEFEWADPENTRVDFTEKLEFTVVMKNTLRAKIKPRM</sequence>
<organism>
    <name type="scientific">Solanum melongena</name>
    <name type="common">Eggplant</name>
    <name type="synonym">Aubergine</name>
    <dbReference type="NCBI Taxonomy" id="223891"/>
    <lineage>
        <taxon>Eukaryota</taxon>
        <taxon>Viridiplantae</taxon>
        <taxon>Streptophyta</taxon>
        <taxon>Embryophyta</taxon>
        <taxon>Tracheophyta</taxon>
        <taxon>Spermatophyta</taxon>
        <taxon>Magnoliopsida</taxon>
        <taxon>eudicotyledons</taxon>
        <taxon>Gunneridae</taxon>
        <taxon>Pentapetalae</taxon>
        <taxon>asterids</taxon>
        <taxon>lamiids</taxon>
        <taxon>Solanales</taxon>
        <taxon>Solanaceae</taxon>
        <taxon>Solanoideae</taxon>
        <taxon>Solaneae</taxon>
        <taxon>Solanum</taxon>
    </lineage>
</organism>